<organism>
    <name type="scientific">Homo sapiens</name>
    <name type="common">Human</name>
    <dbReference type="NCBI Taxonomy" id="9606"/>
    <lineage>
        <taxon>Eukaryota</taxon>
        <taxon>Metazoa</taxon>
        <taxon>Chordata</taxon>
        <taxon>Craniata</taxon>
        <taxon>Vertebrata</taxon>
        <taxon>Euteleostomi</taxon>
        <taxon>Mammalia</taxon>
        <taxon>Eutheria</taxon>
        <taxon>Euarchontoglires</taxon>
        <taxon>Primates</taxon>
        <taxon>Haplorrhini</taxon>
        <taxon>Catarrhini</taxon>
        <taxon>Hominidae</taxon>
        <taxon>Homo</taxon>
    </lineage>
</organism>
<name>RM36_HUMAN</name>
<protein>
    <recommendedName>
        <fullName evidence="5">Large ribosomal subunit protein bL36m</fullName>
    </recommendedName>
    <alternativeName>
        <fullName>39S ribosomal protein L36, mitochondrial</fullName>
        <shortName>L36mt</shortName>
        <shortName>MRP-L36</shortName>
    </alternativeName>
    <alternativeName>
        <fullName>BRCA1-interacting protein 1</fullName>
    </alternativeName>
</protein>
<keyword id="KW-0002">3D-structure</keyword>
<keyword id="KW-0496">Mitochondrion</keyword>
<keyword id="KW-1267">Proteomics identification</keyword>
<keyword id="KW-1185">Reference proteome</keyword>
<keyword id="KW-0687">Ribonucleoprotein</keyword>
<keyword id="KW-0689">Ribosomal protein</keyword>
<keyword id="KW-0809">Transit peptide</keyword>
<feature type="transit peptide" description="Mitochondrion" evidence="1">
    <location>
        <begin position="1"/>
        <end status="unknown"/>
    </location>
</feature>
<feature type="chain" id="PRO_0000030529" description="Large ribosomal subunit protein bL36m">
    <location>
        <begin status="unknown"/>
        <end position="103"/>
    </location>
</feature>
<feature type="sequence conflict" description="In Ref. 2; AAF04788." evidence="6" ref="2">
    <original>G</original>
    <variation>S</variation>
    <location>
        <position position="36"/>
    </location>
</feature>
<feature type="strand" evidence="10">
    <location>
        <begin position="76"/>
        <end position="78"/>
    </location>
</feature>
<feature type="strand" evidence="11">
    <location>
        <begin position="79"/>
        <end position="84"/>
    </location>
</feature>
<feature type="strand" evidence="11">
    <location>
        <begin position="87"/>
        <end position="94"/>
    </location>
</feature>
<feature type="helix" evidence="11">
    <location>
        <begin position="96"/>
        <end position="98"/>
    </location>
</feature>
<accession>Q9P0J6</accession>
<accession>A4UCS0</accession>
<accession>B2R4Z2</accession>
<accession>Q3SWV6</accession>
<accession>Q9UKL7</accession>
<evidence type="ECO:0000255" key="1"/>
<evidence type="ECO:0000269" key="2">
    <source>
    </source>
</evidence>
<evidence type="ECO:0000269" key="3">
    <source>
    </source>
</evidence>
<evidence type="ECO:0000269" key="4">
    <source>
    </source>
</evidence>
<evidence type="ECO:0000303" key="5">
    <source>
    </source>
</evidence>
<evidence type="ECO:0000305" key="6"/>
<evidence type="ECO:0007744" key="7">
    <source>
        <dbReference type="PDB" id="3J7Y"/>
    </source>
</evidence>
<evidence type="ECO:0007744" key="8">
    <source>
        <dbReference type="PDB" id="3J9M"/>
    </source>
</evidence>
<evidence type="ECO:0007744" key="9">
    <source>
        <dbReference type="PDB" id="7QH7"/>
    </source>
</evidence>
<evidence type="ECO:0007829" key="10">
    <source>
        <dbReference type="PDB" id="5OOL"/>
    </source>
</evidence>
<evidence type="ECO:0007829" key="11">
    <source>
        <dbReference type="PDB" id="7OF0"/>
    </source>
</evidence>
<comment type="subunit">
    <text evidence="2 3 4">Component of the mitochondrial large ribosomal subunit (mt-LSU) (PubMed:25278503, PubMed:25838379, PubMed:35177605). Mature mammalian 55S mitochondrial ribosomes consist of a small (28S) and a large (39S) subunit. The 28S small subunit contains a 12S ribosomal RNA (12S mt-rRNA) and 30 different proteins. The 39S large subunit contains a 16S rRNA (16S mt-rRNA), a copy of mitochondrial valine transfer RNA (mt-tRNA(Val)), which plays an integral structural role, and 52 different proteins. bL36m has a zinc binding site.</text>
</comment>
<comment type="interaction">
    <interactant intactId="EBI-2115401">
        <id>Q9P0J6</id>
    </interactant>
    <interactant intactId="EBI-7062247">
        <id>Q9UHD4</id>
        <label>CIDEB</label>
    </interactant>
    <organismsDiffer>false</organismsDiffer>
    <experiments>3</experiments>
</comment>
<comment type="subcellular location">
    <subcellularLocation>
        <location evidence="2 3">Mitochondrion</location>
    </subcellularLocation>
</comment>
<comment type="similarity">
    <text evidence="6">Belongs to the bacterial ribosomal protein bL36 family.</text>
</comment>
<comment type="sequence caution" evidence="6">
    <conflict type="erroneous initiation">
        <sequence resource="EMBL-CDS" id="AAF04788"/>
    </conflict>
</comment>
<sequence length="103" mass="11784">MANLFIRKMVNPLLYLSRHTVKPRALSTFLFGSIRGAAPVAVEPGAAVRSLLSPGLLPHLLPALGFKNKTVLKKRCKDCYLVKRRGRWYVYCKTHPRHKQRQM</sequence>
<gene>
    <name type="primary">MRPL36</name>
    <name type="synonym">BRIP1</name>
</gene>
<dbReference type="EMBL" id="AB049654">
    <property type="protein sequence ID" value="BAB40859.1"/>
    <property type="molecule type" value="mRNA"/>
</dbReference>
<dbReference type="EMBL" id="AF151109">
    <property type="protein sequence ID" value="AAF04788.1"/>
    <property type="status" value="ALT_INIT"/>
    <property type="molecule type" value="mRNA"/>
</dbReference>
<dbReference type="EMBL" id="EF036487">
    <property type="protein sequence ID" value="ABO65073.1"/>
    <property type="molecule type" value="mRNA"/>
</dbReference>
<dbReference type="EMBL" id="AF155653">
    <property type="protein sequence ID" value="AAF67010.1"/>
    <property type="molecule type" value="mRNA"/>
</dbReference>
<dbReference type="EMBL" id="AK312001">
    <property type="protein sequence ID" value="BAG34939.1"/>
    <property type="molecule type" value="mRNA"/>
</dbReference>
<dbReference type="EMBL" id="CH471102">
    <property type="protein sequence ID" value="EAX08145.1"/>
    <property type="molecule type" value="Genomic_DNA"/>
</dbReference>
<dbReference type="EMBL" id="BC020642">
    <property type="protein sequence ID" value="AAH20642.1"/>
    <property type="molecule type" value="mRNA"/>
</dbReference>
<dbReference type="EMBL" id="BC104652">
    <property type="protein sequence ID" value="AAI04653.1"/>
    <property type="molecule type" value="mRNA"/>
</dbReference>
<dbReference type="CCDS" id="CCDS3865.1"/>
<dbReference type="RefSeq" id="NP_115868.1">
    <property type="nucleotide sequence ID" value="NM_032479.4"/>
</dbReference>
<dbReference type="RefSeq" id="XP_016865239.1">
    <property type="nucleotide sequence ID" value="XM_017009750.2"/>
</dbReference>
<dbReference type="RefSeq" id="XP_016865240.1">
    <property type="nucleotide sequence ID" value="XM_017009751.3"/>
</dbReference>
<dbReference type="RefSeq" id="XP_016865241.1">
    <property type="nucleotide sequence ID" value="XM_017009752.2"/>
</dbReference>
<dbReference type="RefSeq" id="XP_054209158.1">
    <property type="nucleotide sequence ID" value="XM_054353183.1"/>
</dbReference>
<dbReference type="RefSeq" id="XP_054209159.1">
    <property type="nucleotide sequence ID" value="XM_054353184.1"/>
</dbReference>
<dbReference type="RefSeq" id="XP_054209160.1">
    <property type="nucleotide sequence ID" value="XM_054353185.1"/>
</dbReference>
<dbReference type="RefSeq" id="XP_054209161.1">
    <property type="nucleotide sequence ID" value="XM_054353186.1"/>
</dbReference>
<dbReference type="PDB" id="3J7Y">
    <property type="method" value="EM"/>
    <property type="resolution" value="3.40 A"/>
    <property type="chains" value="4=1-103"/>
</dbReference>
<dbReference type="PDB" id="3J9M">
    <property type="method" value="EM"/>
    <property type="resolution" value="3.50 A"/>
    <property type="chains" value="4=1-103"/>
</dbReference>
<dbReference type="PDB" id="5OOL">
    <property type="method" value="EM"/>
    <property type="resolution" value="3.06 A"/>
    <property type="chains" value="4=1-103"/>
</dbReference>
<dbReference type="PDB" id="6I9R">
    <property type="method" value="EM"/>
    <property type="resolution" value="3.90 A"/>
    <property type="chains" value="4=1-103"/>
</dbReference>
<dbReference type="PDB" id="6NU2">
    <property type="method" value="EM"/>
    <property type="resolution" value="3.90 A"/>
    <property type="chains" value="4=67-102"/>
</dbReference>
<dbReference type="PDB" id="6NU3">
    <property type="method" value="EM"/>
    <property type="resolution" value="4.40 A"/>
    <property type="chains" value="4=1-103"/>
</dbReference>
<dbReference type="PDB" id="6VLZ">
    <property type="method" value="EM"/>
    <property type="resolution" value="2.97 A"/>
    <property type="chains" value="4=1-103"/>
</dbReference>
<dbReference type="PDB" id="6VMI">
    <property type="method" value="EM"/>
    <property type="resolution" value="2.96 A"/>
    <property type="chains" value="4=1-103"/>
</dbReference>
<dbReference type="PDB" id="6ZM5">
    <property type="method" value="EM"/>
    <property type="resolution" value="2.89 A"/>
    <property type="chains" value="4=1-103"/>
</dbReference>
<dbReference type="PDB" id="6ZM6">
    <property type="method" value="EM"/>
    <property type="resolution" value="2.59 A"/>
    <property type="chains" value="4=1-103"/>
</dbReference>
<dbReference type="PDB" id="6ZS9">
    <property type="method" value="EM"/>
    <property type="resolution" value="4.00 A"/>
    <property type="chains" value="4=1-103"/>
</dbReference>
<dbReference type="PDB" id="6ZSA">
    <property type="method" value="EM"/>
    <property type="resolution" value="4.00 A"/>
    <property type="chains" value="4=1-103"/>
</dbReference>
<dbReference type="PDB" id="6ZSB">
    <property type="method" value="EM"/>
    <property type="resolution" value="4.50 A"/>
    <property type="chains" value="4=1-103"/>
</dbReference>
<dbReference type="PDB" id="6ZSC">
    <property type="method" value="EM"/>
    <property type="resolution" value="3.50 A"/>
    <property type="chains" value="4=1-103"/>
</dbReference>
<dbReference type="PDB" id="6ZSD">
    <property type="method" value="EM"/>
    <property type="resolution" value="3.70 A"/>
    <property type="chains" value="4=1-103"/>
</dbReference>
<dbReference type="PDB" id="6ZSE">
    <property type="method" value="EM"/>
    <property type="resolution" value="5.00 A"/>
    <property type="chains" value="4=1-103"/>
</dbReference>
<dbReference type="PDB" id="6ZSG">
    <property type="method" value="EM"/>
    <property type="resolution" value="4.00 A"/>
    <property type="chains" value="4=1-103"/>
</dbReference>
<dbReference type="PDB" id="7A5F">
    <property type="method" value="EM"/>
    <property type="resolution" value="4.40 A"/>
    <property type="chains" value="43=1-103"/>
</dbReference>
<dbReference type="PDB" id="7A5G">
    <property type="method" value="EM"/>
    <property type="resolution" value="4.33 A"/>
    <property type="chains" value="43=1-103"/>
</dbReference>
<dbReference type="PDB" id="7A5I">
    <property type="method" value="EM"/>
    <property type="resolution" value="3.70 A"/>
    <property type="chains" value="43=1-103"/>
</dbReference>
<dbReference type="PDB" id="7A5J">
    <property type="method" value="EM"/>
    <property type="resolution" value="3.10 A"/>
    <property type="chains" value="4=1-103"/>
</dbReference>
<dbReference type="PDB" id="7A5K">
    <property type="method" value="EM"/>
    <property type="resolution" value="3.70 A"/>
    <property type="chains" value="43=1-103"/>
</dbReference>
<dbReference type="PDB" id="7L08">
    <property type="method" value="EM"/>
    <property type="resolution" value="3.49 A"/>
    <property type="chains" value="4=1-103"/>
</dbReference>
<dbReference type="PDB" id="7L20">
    <property type="method" value="EM"/>
    <property type="resolution" value="3.15 A"/>
    <property type="chains" value="4=1-103"/>
</dbReference>
<dbReference type="PDB" id="7O9K">
    <property type="method" value="EM"/>
    <property type="resolution" value="3.10 A"/>
    <property type="chains" value="4=1-103"/>
</dbReference>
<dbReference type="PDB" id="7O9M">
    <property type="method" value="EM"/>
    <property type="resolution" value="2.50 A"/>
    <property type="chains" value="4=1-103"/>
</dbReference>
<dbReference type="PDB" id="7ODR">
    <property type="method" value="EM"/>
    <property type="resolution" value="2.90 A"/>
    <property type="chains" value="4=1-103"/>
</dbReference>
<dbReference type="PDB" id="7ODS">
    <property type="method" value="EM"/>
    <property type="resolution" value="3.10 A"/>
    <property type="chains" value="4=1-103"/>
</dbReference>
<dbReference type="PDB" id="7ODT">
    <property type="method" value="EM"/>
    <property type="resolution" value="3.10 A"/>
    <property type="chains" value="4=1-103"/>
</dbReference>
<dbReference type="PDB" id="7OF0">
    <property type="method" value="EM"/>
    <property type="resolution" value="2.20 A"/>
    <property type="chains" value="4=1-103"/>
</dbReference>
<dbReference type="PDB" id="7OF2">
    <property type="method" value="EM"/>
    <property type="resolution" value="2.70 A"/>
    <property type="chains" value="4=1-103"/>
</dbReference>
<dbReference type="PDB" id="7OF3">
    <property type="method" value="EM"/>
    <property type="resolution" value="2.70 A"/>
    <property type="chains" value="4=1-103"/>
</dbReference>
<dbReference type="PDB" id="7OF4">
    <property type="method" value="EM"/>
    <property type="resolution" value="2.70 A"/>
    <property type="chains" value="4=1-103"/>
</dbReference>
<dbReference type="PDB" id="7OF5">
    <property type="method" value="EM"/>
    <property type="resolution" value="2.90 A"/>
    <property type="chains" value="4=1-103"/>
</dbReference>
<dbReference type="PDB" id="7OF6">
    <property type="method" value="EM"/>
    <property type="resolution" value="2.60 A"/>
    <property type="chains" value="4=1-103"/>
</dbReference>
<dbReference type="PDB" id="7OF7">
    <property type="method" value="EM"/>
    <property type="resolution" value="2.50 A"/>
    <property type="chains" value="4=1-103"/>
</dbReference>
<dbReference type="PDB" id="7OG4">
    <property type="method" value="EM"/>
    <property type="resolution" value="3.80 A"/>
    <property type="chains" value="4=1-103"/>
</dbReference>
<dbReference type="PDB" id="7OIC">
    <property type="method" value="EM"/>
    <property type="resolution" value="3.10 A"/>
    <property type="chains" value="4=1-103"/>
</dbReference>
<dbReference type="PDB" id="7OID">
    <property type="method" value="EM"/>
    <property type="resolution" value="3.70 A"/>
    <property type="chains" value="4=1-103"/>
</dbReference>
<dbReference type="PDB" id="7OIE">
    <property type="method" value="EM"/>
    <property type="resolution" value="3.50 A"/>
    <property type="chains" value="4=1-103"/>
</dbReference>
<dbReference type="PDB" id="7PD3">
    <property type="method" value="EM"/>
    <property type="resolution" value="3.40 A"/>
    <property type="chains" value="4=1-103"/>
</dbReference>
<dbReference type="PDB" id="7QH7">
    <property type="method" value="EM"/>
    <property type="resolution" value="2.89 A"/>
    <property type="chains" value="4=66-102"/>
</dbReference>
<dbReference type="PDB" id="7QI4">
    <property type="method" value="EM"/>
    <property type="resolution" value="2.21 A"/>
    <property type="chains" value="4=1-103"/>
</dbReference>
<dbReference type="PDB" id="7QI5">
    <property type="method" value="EM"/>
    <property type="resolution" value="2.63 A"/>
    <property type="chains" value="4=1-103"/>
</dbReference>
<dbReference type="PDB" id="7QI6">
    <property type="method" value="EM"/>
    <property type="resolution" value="2.98 A"/>
    <property type="chains" value="4=1-103"/>
</dbReference>
<dbReference type="PDB" id="8ANY">
    <property type="method" value="EM"/>
    <property type="resolution" value="2.85 A"/>
    <property type="chains" value="4=1-103"/>
</dbReference>
<dbReference type="PDB" id="8K2A">
    <property type="method" value="EM"/>
    <property type="resolution" value="2.90 A"/>
    <property type="chains" value="Lj=1-103"/>
</dbReference>
<dbReference type="PDB" id="8K2B">
    <property type="method" value="EM"/>
    <property type="resolution" value="3.40 A"/>
    <property type="chains" value="Lj=1-103"/>
</dbReference>
<dbReference type="PDB" id="8OIR">
    <property type="method" value="EM"/>
    <property type="resolution" value="3.10 A"/>
    <property type="chains" value="Bl=1-103"/>
</dbReference>
<dbReference type="PDB" id="8OIT">
    <property type="method" value="EM"/>
    <property type="resolution" value="2.90 A"/>
    <property type="chains" value="Bl=1-103"/>
</dbReference>
<dbReference type="PDB" id="8QSJ">
    <property type="method" value="EM"/>
    <property type="resolution" value="3.00 A"/>
    <property type="chains" value="4=1-103"/>
</dbReference>
<dbReference type="PDB" id="8RRI">
    <property type="method" value="EM"/>
    <property type="resolution" value="2.40 A"/>
    <property type="chains" value="4=1-103"/>
</dbReference>
<dbReference type="PDB" id="8XT0">
    <property type="method" value="EM"/>
    <property type="resolution" value="3.20 A"/>
    <property type="chains" value="Lj=1-103"/>
</dbReference>
<dbReference type="PDB" id="8XT1">
    <property type="method" value="EM"/>
    <property type="resolution" value="3.10 A"/>
    <property type="chains" value="Lj=1-103"/>
</dbReference>
<dbReference type="PDB" id="8XT2">
    <property type="method" value="EM"/>
    <property type="resolution" value="3.30 A"/>
    <property type="chains" value="Lj=1-103"/>
</dbReference>
<dbReference type="PDB" id="8XT3">
    <property type="method" value="EM"/>
    <property type="resolution" value="3.10 A"/>
    <property type="chains" value="Lj=1-103"/>
</dbReference>
<dbReference type="PDBsum" id="3J7Y"/>
<dbReference type="PDBsum" id="3J9M"/>
<dbReference type="PDBsum" id="5OOL"/>
<dbReference type="PDBsum" id="6I9R"/>
<dbReference type="PDBsum" id="6NU2"/>
<dbReference type="PDBsum" id="6NU3"/>
<dbReference type="PDBsum" id="6VLZ"/>
<dbReference type="PDBsum" id="6VMI"/>
<dbReference type="PDBsum" id="6ZM5"/>
<dbReference type="PDBsum" id="6ZM6"/>
<dbReference type="PDBsum" id="6ZS9"/>
<dbReference type="PDBsum" id="6ZSA"/>
<dbReference type="PDBsum" id="6ZSB"/>
<dbReference type="PDBsum" id="6ZSC"/>
<dbReference type="PDBsum" id="6ZSD"/>
<dbReference type="PDBsum" id="6ZSE"/>
<dbReference type="PDBsum" id="6ZSG"/>
<dbReference type="PDBsum" id="7A5F"/>
<dbReference type="PDBsum" id="7A5G"/>
<dbReference type="PDBsum" id="7A5I"/>
<dbReference type="PDBsum" id="7A5J"/>
<dbReference type="PDBsum" id="7A5K"/>
<dbReference type="PDBsum" id="7L08"/>
<dbReference type="PDBsum" id="7L20"/>
<dbReference type="PDBsum" id="7O9K"/>
<dbReference type="PDBsum" id="7O9M"/>
<dbReference type="PDBsum" id="7ODR"/>
<dbReference type="PDBsum" id="7ODS"/>
<dbReference type="PDBsum" id="7ODT"/>
<dbReference type="PDBsum" id="7OF0"/>
<dbReference type="PDBsum" id="7OF2"/>
<dbReference type="PDBsum" id="7OF3"/>
<dbReference type="PDBsum" id="7OF4"/>
<dbReference type="PDBsum" id="7OF5"/>
<dbReference type="PDBsum" id="7OF6"/>
<dbReference type="PDBsum" id="7OF7"/>
<dbReference type="PDBsum" id="7OG4"/>
<dbReference type="PDBsum" id="7OIC"/>
<dbReference type="PDBsum" id="7OID"/>
<dbReference type="PDBsum" id="7OIE"/>
<dbReference type="PDBsum" id="7PD3"/>
<dbReference type="PDBsum" id="7QH7"/>
<dbReference type="PDBsum" id="7QI4"/>
<dbReference type="PDBsum" id="7QI5"/>
<dbReference type="PDBsum" id="7QI6"/>
<dbReference type="PDBsum" id="8ANY"/>
<dbReference type="PDBsum" id="8K2A"/>
<dbReference type="PDBsum" id="8K2B"/>
<dbReference type="PDBsum" id="8OIR"/>
<dbReference type="PDBsum" id="8OIT"/>
<dbReference type="PDBsum" id="8QSJ"/>
<dbReference type="PDBsum" id="8RRI"/>
<dbReference type="PDBsum" id="8XT0"/>
<dbReference type="PDBsum" id="8XT1"/>
<dbReference type="PDBsum" id="8XT2"/>
<dbReference type="PDBsum" id="8XT3"/>
<dbReference type="EMDB" id="EMD-0514"/>
<dbReference type="EMDB" id="EMD-0515"/>
<dbReference type="EMDB" id="EMD-11278"/>
<dbReference type="EMDB" id="EMD-11279"/>
<dbReference type="EMDB" id="EMD-11390"/>
<dbReference type="EMDB" id="EMD-11391"/>
<dbReference type="EMDB" id="EMD-11392"/>
<dbReference type="EMDB" id="EMD-11393"/>
<dbReference type="EMDB" id="EMD-11394"/>
<dbReference type="EMDB" id="EMD-11395"/>
<dbReference type="EMDB" id="EMD-11397"/>
<dbReference type="EMDB" id="EMD-11641"/>
<dbReference type="EMDB" id="EMD-11642"/>
<dbReference type="EMDB" id="EMD-11644"/>
<dbReference type="EMDB" id="EMD-11645"/>
<dbReference type="EMDB" id="EMD-11646"/>
<dbReference type="EMDB" id="EMD-12763"/>
<dbReference type="EMDB" id="EMD-12764"/>
<dbReference type="EMDB" id="EMD-12845"/>
<dbReference type="EMDB" id="EMD-12846"/>
<dbReference type="EMDB" id="EMD-12847"/>
<dbReference type="EMDB" id="EMD-12865"/>
<dbReference type="EMDB" id="EMD-12867"/>
<dbReference type="EMDB" id="EMD-12868"/>
<dbReference type="EMDB" id="EMD-12869"/>
<dbReference type="EMDB" id="EMD-12870"/>
<dbReference type="EMDB" id="EMD-12871"/>
<dbReference type="EMDB" id="EMD-12872"/>
<dbReference type="EMDB" id="EMD-12877"/>
<dbReference type="EMDB" id="EMD-12925"/>
<dbReference type="EMDB" id="EMD-12926"/>
<dbReference type="EMDB" id="EMD-12927"/>
<dbReference type="EMDB" id="EMD-13329"/>
<dbReference type="EMDB" id="EMD-13967"/>
<dbReference type="EMDB" id="EMD-13980"/>
<dbReference type="EMDB" id="EMD-13981"/>
<dbReference type="EMDB" id="EMD-13982"/>
<dbReference type="EMDB" id="EMD-15544"/>
<dbReference type="EMDB" id="EMD-16897"/>
<dbReference type="EMDB" id="EMD-16899"/>
<dbReference type="EMDB" id="EMD-19460"/>
<dbReference type="EMDB" id="EMD-21233"/>
<dbReference type="EMDB" id="EMD-21242"/>
<dbReference type="EMDB" id="EMD-23096"/>
<dbReference type="EMDB" id="EMD-23121"/>
<dbReference type="EMDB" id="EMD-36836"/>
<dbReference type="EMDB" id="EMD-36837"/>
<dbReference type="EMDB" id="EMD-3842"/>
<dbReference type="EMDB" id="EMD-38632"/>
<dbReference type="EMDB" id="EMD-38633"/>
<dbReference type="EMDB" id="EMD-38634"/>
<dbReference type="EMDB" id="EMD-38635"/>
<dbReference type="EMDB" id="EMD-4434"/>
<dbReference type="SMR" id="Q9P0J6"/>
<dbReference type="BioGRID" id="122366">
    <property type="interactions" value="26"/>
</dbReference>
<dbReference type="ComplexPortal" id="CPX-5226">
    <property type="entry name" value="39S mitochondrial large ribosomal subunit"/>
</dbReference>
<dbReference type="CORUM" id="Q9P0J6"/>
<dbReference type="FunCoup" id="Q9P0J6">
    <property type="interactions" value="386"/>
</dbReference>
<dbReference type="IntAct" id="Q9P0J6">
    <property type="interactions" value="9"/>
</dbReference>
<dbReference type="MINT" id="Q9P0J6"/>
<dbReference type="STRING" id="9606.ENSP00000423399"/>
<dbReference type="iPTMnet" id="Q9P0J6"/>
<dbReference type="BioMuta" id="MRPL36"/>
<dbReference type="DMDM" id="24212267"/>
<dbReference type="jPOST" id="Q9P0J6"/>
<dbReference type="MassIVE" id="Q9P0J6"/>
<dbReference type="PaxDb" id="9606-ENSP00000423399"/>
<dbReference type="PeptideAtlas" id="Q9P0J6"/>
<dbReference type="ProteomicsDB" id="83554"/>
<dbReference type="Pumba" id="Q9P0J6"/>
<dbReference type="TopDownProteomics" id="Q9P0J6"/>
<dbReference type="Antibodypedia" id="22352">
    <property type="antibodies" value="63 antibodies from 20 providers"/>
</dbReference>
<dbReference type="DNASU" id="64979"/>
<dbReference type="Ensembl" id="ENST00000382647.7">
    <property type="protein sequence ID" value="ENSP00000372093.6"/>
    <property type="gene ID" value="ENSG00000171421.13"/>
</dbReference>
<dbReference type="Ensembl" id="ENST00000505059.7">
    <property type="protein sequence ID" value="ENSP00000423152.1"/>
    <property type="gene ID" value="ENSG00000171421.13"/>
</dbReference>
<dbReference type="Ensembl" id="ENST00000505818.1">
    <property type="protein sequence ID" value="ENSP00000427152.1"/>
    <property type="gene ID" value="ENSG00000171421.13"/>
</dbReference>
<dbReference type="Ensembl" id="ENST00000508987.1">
    <property type="protein sequence ID" value="ENSP00000423399.1"/>
    <property type="gene ID" value="ENSG00000171421.13"/>
</dbReference>
<dbReference type="GeneID" id="64979"/>
<dbReference type="KEGG" id="hsa:64979"/>
<dbReference type="MANE-Select" id="ENST00000505059.7">
    <property type="protein sequence ID" value="ENSP00000423152.1"/>
    <property type="RefSeq nucleotide sequence ID" value="NM_032479.4"/>
    <property type="RefSeq protein sequence ID" value="NP_115868.1"/>
</dbReference>
<dbReference type="UCSC" id="uc003jcx.5">
    <property type="organism name" value="human"/>
</dbReference>
<dbReference type="AGR" id="HGNC:14490"/>
<dbReference type="CTD" id="64979"/>
<dbReference type="DisGeNET" id="64979"/>
<dbReference type="GeneCards" id="MRPL36"/>
<dbReference type="HGNC" id="HGNC:14490">
    <property type="gene designation" value="MRPL36"/>
</dbReference>
<dbReference type="HPA" id="ENSG00000171421">
    <property type="expression patterns" value="Low tissue specificity"/>
</dbReference>
<dbReference type="MIM" id="611842">
    <property type="type" value="gene"/>
</dbReference>
<dbReference type="neXtProt" id="NX_Q9P0J6"/>
<dbReference type="OpenTargets" id="ENSG00000171421"/>
<dbReference type="PharmGKB" id="PA30967"/>
<dbReference type="VEuPathDB" id="HostDB:ENSG00000171421"/>
<dbReference type="eggNOG" id="KOG4122">
    <property type="taxonomic scope" value="Eukaryota"/>
</dbReference>
<dbReference type="GeneTree" id="ENSGT00390000010866"/>
<dbReference type="HOGENOM" id="CLU_135723_0_0_1"/>
<dbReference type="InParanoid" id="Q9P0J6"/>
<dbReference type="OMA" id="IYCKTHP"/>
<dbReference type="OrthoDB" id="10265903at2759"/>
<dbReference type="PAN-GO" id="Q9P0J6">
    <property type="GO annotations" value="2 GO annotations based on evolutionary models"/>
</dbReference>
<dbReference type="PhylomeDB" id="Q9P0J6"/>
<dbReference type="TreeFam" id="TF300275"/>
<dbReference type="PathwayCommons" id="Q9P0J6"/>
<dbReference type="Reactome" id="R-HSA-5368286">
    <property type="pathway name" value="Mitochondrial translation initiation"/>
</dbReference>
<dbReference type="Reactome" id="R-HSA-5389840">
    <property type="pathway name" value="Mitochondrial translation elongation"/>
</dbReference>
<dbReference type="Reactome" id="R-HSA-5419276">
    <property type="pathway name" value="Mitochondrial translation termination"/>
</dbReference>
<dbReference type="SignaLink" id="Q9P0J6"/>
<dbReference type="SIGNOR" id="Q9P0J6"/>
<dbReference type="BioGRID-ORCS" id="64979">
    <property type="hits" value="463 hits in 1127 CRISPR screens"/>
</dbReference>
<dbReference type="ChiTaRS" id="MRPL36">
    <property type="organism name" value="human"/>
</dbReference>
<dbReference type="EvolutionaryTrace" id="Q9P0J6"/>
<dbReference type="GenomeRNAi" id="64979"/>
<dbReference type="Pharos" id="Q9P0J6">
    <property type="development level" value="Tbio"/>
</dbReference>
<dbReference type="PRO" id="PR:Q9P0J6"/>
<dbReference type="Proteomes" id="UP000005640">
    <property type="component" value="Chromosome 5"/>
</dbReference>
<dbReference type="RNAct" id="Q9P0J6">
    <property type="molecule type" value="protein"/>
</dbReference>
<dbReference type="Bgee" id="ENSG00000171421">
    <property type="expression patterns" value="Expressed in pancreatic ductal cell and 190 other cell types or tissues"/>
</dbReference>
<dbReference type="ExpressionAtlas" id="Q9P0J6">
    <property type="expression patterns" value="baseline and differential"/>
</dbReference>
<dbReference type="GO" id="GO:0005743">
    <property type="term" value="C:mitochondrial inner membrane"/>
    <property type="evidence" value="ECO:0000304"/>
    <property type="project" value="Reactome"/>
</dbReference>
<dbReference type="GO" id="GO:0005762">
    <property type="term" value="C:mitochondrial large ribosomal subunit"/>
    <property type="evidence" value="ECO:0000314"/>
    <property type="project" value="UniProtKB"/>
</dbReference>
<dbReference type="GO" id="GO:0005739">
    <property type="term" value="C:mitochondrion"/>
    <property type="evidence" value="ECO:0000314"/>
    <property type="project" value="HPA"/>
</dbReference>
<dbReference type="GO" id="GO:0016604">
    <property type="term" value="C:nuclear body"/>
    <property type="evidence" value="ECO:0000314"/>
    <property type="project" value="HPA"/>
</dbReference>
<dbReference type="GO" id="GO:0003735">
    <property type="term" value="F:structural constituent of ribosome"/>
    <property type="evidence" value="ECO:0007669"/>
    <property type="project" value="InterPro"/>
</dbReference>
<dbReference type="GO" id="GO:0032543">
    <property type="term" value="P:mitochondrial translation"/>
    <property type="evidence" value="ECO:0000303"/>
    <property type="project" value="ComplexPortal"/>
</dbReference>
<dbReference type="GO" id="GO:0006412">
    <property type="term" value="P:translation"/>
    <property type="evidence" value="ECO:0000303"/>
    <property type="project" value="UniProtKB"/>
</dbReference>
<dbReference type="HAMAP" id="MF_00251">
    <property type="entry name" value="Ribosomal_bL36"/>
    <property type="match status" value="1"/>
</dbReference>
<dbReference type="InterPro" id="IPR052143">
    <property type="entry name" value="Mitoribosomal_bL36m"/>
</dbReference>
<dbReference type="InterPro" id="IPR000473">
    <property type="entry name" value="Ribosomal_bL36"/>
</dbReference>
<dbReference type="InterPro" id="IPR035977">
    <property type="entry name" value="Ribosomal_bL36_sp"/>
</dbReference>
<dbReference type="NCBIfam" id="TIGR01022">
    <property type="entry name" value="rpmJ_bact"/>
    <property type="match status" value="1"/>
</dbReference>
<dbReference type="PANTHER" id="PTHR46909">
    <property type="entry name" value="39S RIBOSOMAL PROTEIN L36, MITOCHONDRIAL"/>
    <property type="match status" value="1"/>
</dbReference>
<dbReference type="PANTHER" id="PTHR46909:SF3">
    <property type="entry name" value="LARGE RIBOSOMAL SUBUNIT PROTEIN BL36M"/>
    <property type="match status" value="1"/>
</dbReference>
<dbReference type="Pfam" id="PF00444">
    <property type="entry name" value="Ribosomal_L36"/>
    <property type="match status" value="1"/>
</dbReference>
<dbReference type="SUPFAM" id="SSF57840">
    <property type="entry name" value="Ribosomal protein L36"/>
    <property type="match status" value="1"/>
</dbReference>
<reference key="1">
    <citation type="journal article" date="2001" name="J. Biol. Chem.">
        <title>Structural compensation for the deficit of rRNA with proteins in the mammalian mitochondrial ribosome. Systematic analysis of protein components of the large ribosomal subunit from mammalian mitochondria.</title>
        <authorList>
            <person name="Suzuki T."/>
            <person name="Terasaki M."/>
            <person name="Takemoto-Hori C."/>
            <person name="Hanada T."/>
            <person name="Ueda T."/>
            <person name="Wada A."/>
            <person name="Watanabe K."/>
        </authorList>
    </citation>
    <scope>NUCLEOTIDE SEQUENCE [MRNA]</scope>
</reference>
<reference key="2">
    <citation type="submission" date="1999-05" db="EMBL/GenBank/DDBJ databases">
        <title>BRIP1, a candidate for BRCA1-interacting protein.</title>
        <authorList>
            <person name="Wang Q."/>
            <person name="Zhang H."/>
            <person name="Greene M.I."/>
        </authorList>
    </citation>
    <scope>NUCLEOTIDE SEQUENCE [MRNA]</scope>
</reference>
<reference key="3">
    <citation type="submission" date="2006-10" db="EMBL/GenBank/DDBJ databases">
        <title>Searching for interaction partners of the transcription factor REST/NRSF by two-hybrid screening.</title>
        <authorList>
            <person name="Santana-Roman H."/>
            <person name="Curiel-Quesada E."/>
            <person name="Tapia-Ramirez J."/>
        </authorList>
    </citation>
    <scope>NUCLEOTIDE SEQUENCE [MRNA]</scope>
</reference>
<reference key="4">
    <citation type="journal article" date="2000" name="Proc. Natl. Acad. Sci. U.S.A.">
        <title>Gene expression profiling in the human hypothalamus-pituitary-adrenal axis and full-length cDNA cloning.</title>
        <authorList>
            <person name="Hu R.-M."/>
            <person name="Han Z.-G."/>
            <person name="Song H.-D."/>
            <person name="Peng Y.-D."/>
            <person name="Huang Q.-H."/>
            <person name="Ren S.-X."/>
            <person name="Gu Y.-J."/>
            <person name="Huang C.-H."/>
            <person name="Li Y.-B."/>
            <person name="Jiang C.-L."/>
            <person name="Fu G."/>
            <person name="Zhang Q.-H."/>
            <person name="Gu B.-W."/>
            <person name="Dai M."/>
            <person name="Mao Y.-F."/>
            <person name="Gao G.-F."/>
            <person name="Rong R."/>
            <person name="Ye M."/>
            <person name="Zhou J."/>
            <person name="Xu S.-H."/>
            <person name="Gu J."/>
            <person name="Shi J.-X."/>
            <person name="Jin W.-R."/>
            <person name="Zhang C.-K."/>
            <person name="Wu T.-M."/>
            <person name="Huang G.-Y."/>
            <person name="Chen Z."/>
            <person name="Chen M.-D."/>
            <person name="Chen J.-L."/>
        </authorList>
    </citation>
    <scope>NUCLEOTIDE SEQUENCE [LARGE SCALE MRNA]</scope>
    <source>
        <tissue>Adrenal gland</tissue>
    </source>
</reference>
<reference key="5">
    <citation type="journal article" date="2004" name="Nat. Genet.">
        <title>Complete sequencing and characterization of 21,243 full-length human cDNAs.</title>
        <authorList>
            <person name="Ota T."/>
            <person name="Suzuki Y."/>
            <person name="Nishikawa T."/>
            <person name="Otsuki T."/>
            <person name="Sugiyama T."/>
            <person name="Irie R."/>
            <person name="Wakamatsu A."/>
            <person name="Hayashi K."/>
            <person name="Sato H."/>
            <person name="Nagai K."/>
            <person name="Kimura K."/>
            <person name="Makita H."/>
            <person name="Sekine M."/>
            <person name="Obayashi M."/>
            <person name="Nishi T."/>
            <person name="Shibahara T."/>
            <person name="Tanaka T."/>
            <person name="Ishii S."/>
            <person name="Yamamoto J."/>
            <person name="Saito K."/>
            <person name="Kawai Y."/>
            <person name="Isono Y."/>
            <person name="Nakamura Y."/>
            <person name="Nagahari K."/>
            <person name="Murakami K."/>
            <person name="Yasuda T."/>
            <person name="Iwayanagi T."/>
            <person name="Wagatsuma M."/>
            <person name="Shiratori A."/>
            <person name="Sudo H."/>
            <person name="Hosoiri T."/>
            <person name="Kaku Y."/>
            <person name="Kodaira H."/>
            <person name="Kondo H."/>
            <person name="Sugawara M."/>
            <person name="Takahashi M."/>
            <person name="Kanda K."/>
            <person name="Yokoi T."/>
            <person name="Furuya T."/>
            <person name="Kikkawa E."/>
            <person name="Omura Y."/>
            <person name="Abe K."/>
            <person name="Kamihara K."/>
            <person name="Katsuta N."/>
            <person name="Sato K."/>
            <person name="Tanikawa M."/>
            <person name="Yamazaki M."/>
            <person name="Ninomiya K."/>
            <person name="Ishibashi T."/>
            <person name="Yamashita H."/>
            <person name="Murakawa K."/>
            <person name="Fujimori K."/>
            <person name="Tanai H."/>
            <person name="Kimata M."/>
            <person name="Watanabe M."/>
            <person name="Hiraoka S."/>
            <person name="Chiba Y."/>
            <person name="Ishida S."/>
            <person name="Ono Y."/>
            <person name="Takiguchi S."/>
            <person name="Watanabe S."/>
            <person name="Yosida M."/>
            <person name="Hotuta T."/>
            <person name="Kusano J."/>
            <person name="Kanehori K."/>
            <person name="Takahashi-Fujii A."/>
            <person name="Hara H."/>
            <person name="Tanase T.-O."/>
            <person name="Nomura Y."/>
            <person name="Togiya S."/>
            <person name="Komai F."/>
            <person name="Hara R."/>
            <person name="Takeuchi K."/>
            <person name="Arita M."/>
            <person name="Imose N."/>
            <person name="Musashino K."/>
            <person name="Yuuki H."/>
            <person name="Oshima A."/>
            <person name="Sasaki N."/>
            <person name="Aotsuka S."/>
            <person name="Yoshikawa Y."/>
            <person name="Matsunawa H."/>
            <person name="Ichihara T."/>
            <person name="Shiohata N."/>
            <person name="Sano S."/>
            <person name="Moriya S."/>
            <person name="Momiyama H."/>
            <person name="Satoh N."/>
            <person name="Takami S."/>
            <person name="Terashima Y."/>
            <person name="Suzuki O."/>
            <person name="Nakagawa S."/>
            <person name="Senoh A."/>
            <person name="Mizoguchi H."/>
            <person name="Goto Y."/>
            <person name="Shimizu F."/>
            <person name="Wakebe H."/>
            <person name="Hishigaki H."/>
            <person name="Watanabe T."/>
            <person name="Sugiyama A."/>
            <person name="Takemoto M."/>
            <person name="Kawakami B."/>
            <person name="Yamazaki M."/>
            <person name="Watanabe K."/>
            <person name="Kumagai A."/>
            <person name="Itakura S."/>
            <person name="Fukuzumi Y."/>
            <person name="Fujimori Y."/>
            <person name="Komiyama M."/>
            <person name="Tashiro H."/>
            <person name="Tanigami A."/>
            <person name="Fujiwara T."/>
            <person name="Ono T."/>
            <person name="Yamada K."/>
            <person name="Fujii Y."/>
            <person name="Ozaki K."/>
            <person name="Hirao M."/>
            <person name="Ohmori Y."/>
            <person name="Kawabata A."/>
            <person name="Hikiji T."/>
            <person name="Kobatake N."/>
            <person name="Inagaki H."/>
            <person name="Ikema Y."/>
            <person name="Okamoto S."/>
            <person name="Okitani R."/>
            <person name="Kawakami T."/>
            <person name="Noguchi S."/>
            <person name="Itoh T."/>
            <person name="Shigeta K."/>
            <person name="Senba T."/>
            <person name="Matsumura K."/>
            <person name="Nakajima Y."/>
            <person name="Mizuno T."/>
            <person name="Morinaga M."/>
            <person name="Sasaki M."/>
            <person name="Togashi T."/>
            <person name="Oyama M."/>
            <person name="Hata H."/>
            <person name="Watanabe M."/>
            <person name="Komatsu T."/>
            <person name="Mizushima-Sugano J."/>
            <person name="Satoh T."/>
            <person name="Shirai Y."/>
            <person name="Takahashi Y."/>
            <person name="Nakagawa K."/>
            <person name="Okumura K."/>
            <person name="Nagase T."/>
            <person name="Nomura N."/>
            <person name="Kikuchi H."/>
            <person name="Masuho Y."/>
            <person name="Yamashita R."/>
            <person name="Nakai K."/>
            <person name="Yada T."/>
            <person name="Nakamura Y."/>
            <person name="Ohara O."/>
            <person name="Isogai T."/>
            <person name="Sugano S."/>
        </authorList>
    </citation>
    <scope>NUCLEOTIDE SEQUENCE [LARGE SCALE MRNA]</scope>
    <source>
        <tissue>Thalamus</tissue>
    </source>
</reference>
<reference key="6">
    <citation type="submission" date="2005-09" db="EMBL/GenBank/DDBJ databases">
        <authorList>
            <person name="Mural R.J."/>
            <person name="Istrail S."/>
            <person name="Sutton G.G."/>
            <person name="Florea L."/>
            <person name="Halpern A.L."/>
            <person name="Mobarry C.M."/>
            <person name="Lippert R."/>
            <person name="Walenz B."/>
            <person name="Shatkay H."/>
            <person name="Dew I."/>
            <person name="Miller J.R."/>
            <person name="Flanigan M.J."/>
            <person name="Edwards N.J."/>
            <person name="Bolanos R."/>
            <person name="Fasulo D."/>
            <person name="Halldorsson B.V."/>
            <person name="Hannenhalli S."/>
            <person name="Turner R."/>
            <person name="Yooseph S."/>
            <person name="Lu F."/>
            <person name="Nusskern D.R."/>
            <person name="Shue B.C."/>
            <person name="Zheng X.H."/>
            <person name="Zhong F."/>
            <person name="Delcher A.L."/>
            <person name="Huson D.H."/>
            <person name="Kravitz S.A."/>
            <person name="Mouchard L."/>
            <person name="Reinert K."/>
            <person name="Remington K.A."/>
            <person name="Clark A.G."/>
            <person name="Waterman M.S."/>
            <person name="Eichler E.E."/>
            <person name="Adams M.D."/>
            <person name="Hunkapiller M.W."/>
            <person name="Myers E.W."/>
            <person name="Venter J.C."/>
        </authorList>
    </citation>
    <scope>NUCLEOTIDE SEQUENCE [LARGE SCALE GENOMIC DNA]</scope>
</reference>
<reference key="7">
    <citation type="journal article" date="2004" name="Genome Res.">
        <title>The status, quality, and expansion of the NIH full-length cDNA project: the Mammalian Gene Collection (MGC).</title>
        <authorList>
            <consortium name="The MGC Project Team"/>
        </authorList>
    </citation>
    <scope>NUCLEOTIDE SEQUENCE [LARGE SCALE MRNA]</scope>
    <source>
        <tissue>Testis</tissue>
    </source>
</reference>
<reference evidence="7" key="8">
    <citation type="journal article" date="2014" name="Science">
        <title>Structure of the large ribosomal subunit from human mitochondria.</title>
        <authorList>
            <person name="Brown A."/>
            <person name="Amunts A."/>
            <person name="Bai X.C."/>
            <person name="Sugimoto Y."/>
            <person name="Edwards P.C."/>
            <person name="Murshudov G."/>
            <person name="Scheres S.H."/>
            <person name="Ramakrishnan V."/>
        </authorList>
    </citation>
    <scope>STRUCTURE BY ELECTRON MICROSCOPY (3.40 ANGSTROMS)</scope>
    <scope>SUBCELLULAR LOCATION</scope>
    <scope>SUBUNIT</scope>
</reference>
<reference evidence="8" key="9">
    <citation type="journal article" date="2015" name="Science">
        <title>Ribosome. The structure of the human mitochondrial ribosome.</title>
        <authorList>
            <person name="Amunts A."/>
            <person name="Brown A."/>
            <person name="Toots J."/>
            <person name="Scheres S.H."/>
            <person name="Ramakrishnan V."/>
        </authorList>
    </citation>
    <scope>STRUCTURE BY ELECTRON MICROSCOPY (3.50 ANGSTROMS)</scope>
    <scope>SUBCELLULAR LOCATION</scope>
    <scope>SUBUNIT</scope>
</reference>
<reference evidence="9" key="10">
    <citation type="journal article" date="2022" name="Nat. Commun.">
        <title>A late-stage assembly checkpoint of the human mitochondrial ribosome large subunit.</title>
        <authorList>
            <person name="Rebelo-Guiomar P."/>
            <person name="Pellegrino S."/>
            <person name="Dent K.C."/>
            <person name="Sas-Chen A."/>
            <person name="Miller-Fleming L."/>
            <person name="Garone C."/>
            <person name="Van Haute L."/>
            <person name="Rogan J.F."/>
            <person name="Dinan A."/>
            <person name="Firth A.E."/>
            <person name="Andrews B."/>
            <person name="Whitworth A.J."/>
            <person name="Schwartz S."/>
            <person name="Warren A.J."/>
            <person name="Minczuk M."/>
        </authorList>
    </citation>
    <scope>STRUCTURE BY ELECTRON MICROSCOPY (2.9 ANGSTROMS) IN COMPLEX WITH MTLSU</scope>
    <scope>SUBUNIT</scope>
</reference>
<proteinExistence type="evidence at protein level"/>